<reference key="1">
    <citation type="submission" date="2008-05" db="EMBL/GenBank/DDBJ databases">
        <title>Genome sequence of Clostridium botulinum Ba4 strain 657.</title>
        <authorList>
            <person name="Shrivastava S."/>
            <person name="Brown J.L."/>
            <person name="Bruce D."/>
            <person name="Detter C."/>
            <person name="Munk C."/>
            <person name="Smith L.A."/>
            <person name="Smith T.J."/>
            <person name="Sutton G."/>
            <person name="Brettin T.S."/>
        </authorList>
    </citation>
    <scope>NUCLEOTIDE SEQUENCE [LARGE SCALE GENOMIC DNA]</scope>
    <source>
        <strain>657 / Type Ba4</strain>
    </source>
</reference>
<accession>C3KXQ7</accession>
<proteinExistence type="inferred from homology"/>
<protein>
    <recommendedName>
        <fullName evidence="1">Chromosomal replication initiator protein DnaA</fullName>
    </recommendedName>
</protein>
<feature type="chain" id="PRO_1000205648" description="Chromosomal replication initiator protein DnaA">
    <location>
        <begin position="1"/>
        <end position="448"/>
    </location>
</feature>
<feature type="region of interest" description="Domain I, interacts with DnaA modulators" evidence="1">
    <location>
        <begin position="1"/>
        <end position="73"/>
    </location>
</feature>
<feature type="region of interest" description="Domain II" evidence="1">
    <location>
        <begin position="73"/>
        <end position="109"/>
    </location>
</feature>
<feature type="region of interest" description="Domain III, AAA+ region" evidence="1">
    <location>
        <begin position="110"/>
        <end position="326"/>
    </location>
</feature>
<feature type="region of interest" description="Domain IV, binds dsDNA" evidence="1">
    <location>
        <begin position="327"/>
        <end position="448"/>
    </location>
</feature>
<feature type="binding site" evidence="1">
    <location>
        <position position="154"/>
    </location>
    <ligand>
        <name>ATP</name>
        <dbReference type="ChEBI" id="CHEBI:30616"/>
    </ligand>
</feature>
<feature type="binding site" evidence="1">
    <location>
        <position position="156"/>
    </location>
    <ligand>
        <name>ATP</name>
        <dbReference type="ChEBI" id="CHEBI:30616"/>
    </ligand>
</feature>
<feature type="binding site" evidence="1">
    <location>
        <position position="157"/>
    </location>
    <ligand>
        <name>ATP</name>
        <dbReference type="ChEBI" id="CHEBI:30616"/>
    </ligand>
</feature>
<feature type="binding site" evidence="1">
    <location>
        <position position="158"/>
    </location>
    <ligand>
        <name>ATP</name>
        <dbReference type="ChEBI" id="CHEBI:30616"/>
    </ligand>
</feature>
<name>DNAA_CLOB6</name>
<organism>
    <name type="scientific">Clostridium botulinum (strain 657 / Type Ba4)</name>
    <dbReference type="NCBI Taxonomy" id="515621"/>
    <lineage>
        <taxon>Bacteria</taxon>
        <taxon>Bacillati</taxon>
        <taxon>Bacillota</taxon>
        <taxon>Clostridia</taxon>
        <taxon>Eubacteriales</taxon>
        <taxon>Clostridiaceae</taxon>
        <taxon>Clostridium</taxon>
    </lineage>
</organism>
<sequence>MSTHLTETWEKAINIIKGELTEVSFNTWIKSINPISLENNSFKLAVPNDFTKGILESRYKDLIVNALKLLTSKKYNIDFIVTTEEKIEENEKNHNNEKSNIVVNDEMSTMLNPKYTFDSFVIGNSNRFAHAASLAVAEAPAKAYNPLFIYGGVGLGKTHLMHAIGHYILHNNPKSQVVYVSSEKFTNELINSIKDDKNVEFRNKYRNIDILLVDDIQFIAGKERTQEEFFHTFNALYEANKQIIISSDRPPKEIPTLEDRLRSRFEWGLIADIQAPDFETRMAILKKKADVEKLNIPNEVMVYIATKIKSNIRELEGALIRIVAFSSLTNKEISVDLASEALKDIISSKQTRQVTIDIIQEVVANYYNLKIEDLKSARRTRNIAFPRQIAMYLSRKLTDMSLPKIGEEFGGRDHTTVIHAYEKISNNLKKDESLQNAINELNKRINQK</sequence>
<keyword id="KW-0067">ATP-binding</keyword>
<keyword id="KW-0963">Cytoplasm</keyword>
<keyword id="KW-0235">DNA replication</keyword>
<keyword id="KW-0238">DNA-binding</keyword>
<keyword id="KW-0446">Lipid-binding</keyword>
<keyword id="KW-0547">Nucleotide-binding</keyword>
<evidence type="ECO:0000255" key="1">
    <source>
        <dbReference type="HAMAP-Rule" id="MF_00377"/>
    </source>
</evidence>
<gene>
    <name evidence="1" type="primary">dnaA</name>
    <name type="ordered locus">CLJ_B0001</name>
</gene>
<comment type="function">
    <text evidence="1">Plays an essential role in the initiation and regulation of chromosomal replication. ATP-DnaA binds to the origin of replication (oriC) to initiate formation of the DNA replication initiation complex once per cell cycle. Binds the DnaA box (a 9 base pair repeat at the origin) and separates the double-stranded (ds)DNA. Forms a right-handed helical filament on oriC DNA; dsDNA binds to the exterior of the filament while single-stranded (ss)DNA is stabiized in the filament's interior. The ATP-DnaA-oriC complex binds and stabilizes one strand of the AT-rich DNA unwinding element (DUE), permitting loading of DNA polymerase. After initiation quickly degrades to an ADP-DnaA complex that is not apt for DNA replication. Binds acidic phospholipids.</text>
</comment>
<comment type="subunit">
    <text evidence="1">Oligomerizes as a right-handed, spiral filament on DNA at oriC.</text>
</comment>
<comment type="subcellular location">
    <subcellularLocation>
        <location evidence="1">Cytoplasm</location>
    </subcellularLocation>
</comment>
<comment type="domain">
    <text evidence="1">Domain I is involved in oligomerization and binding regulators, domain II is flexibile and of varying length in different bacteria, domain III forms the AAA+ region, while domain IV binds dsDNA.</text>
</comment>
<comment type="similarity">
    <text evidence="1">Belongs to the DnaA family.</text>
</comment>
<dbReference type="EMBL" id="CP001083">
    <property type="protein sequence ID" value="ACQ52083.1"/>
    <property type="molecule type" value="Genomic_DNA"/>
</dbReference>
<dbReference type="RefSeq" id="WP_003361827.1">
    <property type="nucleotide sequence ID" value="NC_012658.1"/>
</dbReference>
<dbReference type="SMR" id="C3KXQ7"/>
<dbReference type="KEGG" id="cbi:CLJ_B0001"/>
<dbReference type="HOGENOM" id="CLU_026910_3_1_9"/>
<dbReference type="Proteomes" id="UP000002333">
    <property type="component" value="Chromosome"/>
</dbReference>
<dbReference type="GO" id="GO:0005737">
    <property type="term" value="C:cytoplasm"/>
    <property type="evidence" value="ECO:0007669"/>
    <property type="project" value="UniProtKB-SubCell"/>
</dbReference>
<dbReference type="GO" id="GO:0005886">
    <property type="term" value="C:plasma membrane"/>
    <property type="evidence" value="ECO:0007669"/>
    <property type="project" value="TreeGrafter"/>
</dbReference>
<dbReference type="GO" id="GO:0005524">
    <property type="term" value="F:ATP binding"/>
    <property type="evidence" value="ECO:0007669"/>
    <property type="project" value="UniProtKB-UniRule"/>
</dbReference>
<dbReference type="GO" id="GO:0016887">
    <property type="term" value="F:ATP hydrolysis activity"/>
    <property type="evidence" value="ECO:0007669"/>
    <property type="project" value="InterPro"/>
</dbReference>
<dbReference type="GO" id="GO:0003688">
    <property type="term" value="F:DNA replication origin binding"/>
    <property type="evidence" value="ECO:0007669"/>
    <property type="project" value="UniProtKB-UniRule"/>
</dbReference>
<dbReference type="GO" id="GO:0008289">
    <property type="term" value="F:lipid binding"/>
    <property type="evidence" value="ECO:0007669"/>
    <property type="project" value="UniProtKB-KW"/>
</dbReference>
<dbReference type="GO" id="GO:0006270">
    <property type="term" value="P:DNA replication initiation"/>
    <property type="evidence" value="ECO:0007669"/>
    <property type="project" value="UniProtKB-UniRule"/>
</dbReference>
<dbReference type="GO" id="GO:0006275">
    <property type="term" value="P:regulation of DNA replication"/>
    <property type="evidence" value="ECO:0007669"/>
    <property type="project" value="UniProtKB-UniRule"/>
</dbReference>
<dbReference type="CDD" id="cd00009">
    <property type="entry name" value="AAA"/>
    <property type="match status" value="1"/>
</dbReference>
<dbReference type="CDD" id="cd06571">
    <property type="entry name" value="Bac_DnaA_C"/>
    <property type="match status" value="1"/>
</dbReference>
<dbReference type="FunFam" id="1.10.1750.10:FF:000003">
    <property type="entry name" value="Chromosomal replication initiator protein DnaA"/>
    <property type="match status" value="1"/>
</dbReference>
<dbReference type="FunFam" id="1.10.8.60:FF:000003">
    <property type="entry name" value="Chromosomal replication initiator protein DnaA"/>
    <property type="match status" value="1"/>
</dbReference>
<dbReference type="FunFam" id="3.40.50.300:FF:000150">
    <property type="entry name" value="Chromosomal replication initiator protein DnaA"/>
    <property type="match status" value="1"/>
</dbReference>
<dbReference type="Gene3D" id="1.10.1750.10">
    <property type="match status" value="1"/>
</dbReference>
<dbReference type="Gene3D" id="1.10.8.60">
    <property type="match status" value="1"/>
</dbReference>
<dbReference type="Gene3D" id="3.30.300.180">
    <property type="match status" value="1"/>
</dbReference>
<dbReference type="Gene3D" id="3.40.50.300">
    <property type="entry name" value="P-loop containing nucleotide triphosphate hydrolases"/>
    <property type="match status" value="1"/>
</dbReference>
<dbReference type="HAMAP" id="MF_00377">
    <property type="entry name" value="DnaA_bact"/>
    <property type="match status" value="1"/>
</dbReference>
<dbReference type="InterPro" id="IPR003593">
    <property type="entry name" value="AAA+_ATPase"/>
</dbReference>
<dbReference type="InterPro" id="IPR001957">
    <property type="entry name" value="Chromosome_initiator_DnaA"/>
</dbReference>
<dbReference type="InterPro" id="IPR020591">
    <property type="entry name" value="Chromosome_initiator_DnaA-like"/>
</dbReference>
<dbReference type="InterPro" id="IPR018312">
    <property type="entry name" value="Chromosome_initiator_DnaA_CS"/>
</dbReference>
<dbReference type="InterPro" id="IPR013159">
    <property type="entry name" value="DnaA_C"/>
</dbReference>
<dbReference type="InterPro" id="IPR013317">
    <property type="entry name" value="DnaA_dom"/>
</dbReference>
<dbReference type="InterPro" id="IPR024633">
    <property type="entry name" value="DnaA_N_dom"/>
</dbReference>
<dbReference type="InterPro" id="IPR038454">
    <property type="entry name" value="DnaA_N_sf"/>
</dbReference>
<dbReference type="InterPro" id="IPR027417">
    <property type="entry name" value="P-loop_NTPase"/>
</dbReference>
<dbReference type="InterPro" id="IPR010921">
    <property type="entry name" value="Trp_repressor/repl_initiator"/>
</dbReference>
<dbReference type="NCBIfam" id="TIGR00362">
    <property type="entry name" value="DnaA"/>
    <property type="match status" value="1"/>
</dbReference>
<dbReference type="NCBIfam" id="NF010686">
    <property type="entry name" value="PRK14086.1"/>
    <property type="match status" value="1"/>
</dbReference>
<dbReference type="PANTHER" id="PTHR30050">
    <property type="entry name" value="CHROMOSOMAL REPLICATION INITIATOR PROTEIN DNAA"/>
    <property type="match status" value="1"/>
</dbReference>
<dbReference type="PANTHER" id="PTHR30050:SF2">
    <property type="entry name" value="CHROMOSOMAL REPLICATION INITIATOR PROTEIN DNAA"/>
    <property type="match status" value="1"/>
</dbReference>
<dbReference type="Pfam" id="PF00308">
    <property type="entry name" value="Bac_DnaA"/>
    <property type="match status" value="1"/>
</dbReference>
<dbReference type="Pfam" id="PF08299">
    <property type="entry name" value="Bac_DnaA_C"/>
    <property type="match status" value="1"/>
</dbReference>
<dbReference type="Pfam" id="PF11638">
    <property type="entry name" value="DnaA_N"/>
    <property type="match status" value="1"/>
</dbReference>
<dbReference type="PRINTS" id="PR00051">
    <property type="entry name" value="DNAA"/>
</dbReference>
<dbReference type="SMART" id="SM00382">
    <property type="entry name" value="AAA"/>
    <property type="match status" value="1"/>
</dbReference>
<dbReference type="SMART" id="SM00760">
    <property type="entry name" value="Bac_DnaA_C"/>
    <property type="match status" value="1"/>
</dbReference>
<dbReference type="SUPFAM" id="SSF52540">
    <property type="entry name" value="P-loop containing nucleoside triphosphate hydrolases"/>
    <property type="match status" value="1"/>
</dbReference>
<dbReference type="SUPFAM" id="SSF48295">
    <property type="entry name" value="TrpR-like"/>
    <property type="match status" value="1"/>
</dbReference>
<dbReference type="PROSITE" id="PS01008">
    <property type="entry name" value="DNAA"/>
    <property type="match status" value="1"/>
</dbReference>